<sequence length="954" mass="105938">MSLPLTEEQRKKIEENRQKALARRAEKLLAEQHQRTSSGTSIAGNPFQAKQGPSQNFPRESCKPVSHGVIFKQQNLSSSSNADQRPHDSHSFQAKGIWKKPEEMPTACPGHSPRSQMALTGISPPLAQSPPEVPKQQLLSYELGQGHAQASPEIRFTPFANPTHKPLAKPKSSQETPAHSSGQPPRDAKLEAKTAKASPSGQNISYIHSSSESVTPRTEGRLQQKSGSSVQKGVNSQKGKCVRNGDRFQVLIGYNAELIAVFKTLPSKNYDPDTKTWNFSMNDYSALMKAAQSLPTVNLQPLEWAYGSSESPSTSSEGQAGLPSAPSLSFVKGRCMLISRAYFEADISYSQDLIALFKQMDSRRYDVKTRKWSFLLEEHSKLIAKVRCLPQVQLDPLPTTLTLAFASQLKKTSLSLTPDVPEADLSEVDPKLVSNLMPFQRAGVNFAIAKGGRLLLADDMGLGKTIQAICIAAFYRKEWPLLVVVPSSVRFTWEQAFLRWLPSLSPDCINVVVTGKDRLTAGLINIVSFDLLSKLEKQLKTPFKVVIIDESHFLKNSRTARCRAAMPVLKVAKRVILLSGTPAMSRPAELYTQIIAVKPTFFPQFHAFGLRYCDAKRMPWGWDYSGSSNLGELKLLLEEAVMLRRLKSDVLSQLPAKQRKIVVIAPGRINARTRAALDAAAKEMTTKDKTKQQQKDALILFFNRTAEAKIPSVIEYILDLLESGREKFLVFAHHKVVLDAITQELERKHVQHIRIDGSTSSAEREDLCQQFQLSERHAVAVLSITAANMGLTFSSADLVVFAELFWNPGVLIQAEDRVHRIGQTSSVGIHYLVAKGTADDYLWPLIQEKIKVLAEAGLSETNFSEMTESTDYLYKDPKQQKIYDLFQKSFEKEGSDMELLEAAESFDPGSASGTSGSSSQNMGDTLDESSLTASPQKKRRFEFFDNWDSFTSPL</sequence>
<organism>
    <name type="scientific">Homo sapiens</name>
    <name type="common">Human</name>
    <dbReference type="NCBI Taxonomy" id="9606"/>
    <lineage>
        <taxon>Eukaryota</taxon>
        <taxon>Metazoa</taxon>
        <taxon>Chordata</taxon>
        <taxon>Craniata</taxon>
        <taxon>Vertebrata</taxon>
        <taxon>Euteleostomi</taxon>
        <taxon>Mammalia</taxon>
        <taxon>Eutheria</taxon>
        <taxon>Euarchontoglires</taxon>
        <taxon>Primates</taxon>
        <taxon>Haplorrhini</taxon>
        <taxon>Catarrhini</taxon>
        <taxon>Hominidae</taxon>
        <taxon>Homo</taxon>
    </lineage>
</organism>
<feature type="initiator methionine" description="Removed" evidence="24">
    <location>
        <position position="1"/>
    </location>
</feature>
<feature type="chain" id="PRO_0000074348" description="SWI/SNF-related matrix-associated actin-dependent regulator of chromatin subfamily A-like protein 1">
    <location>
        <begin position="2"/>
        <end position="954"/>
    </location>
</feature>
<feature type="domain" description="HARP 1" evidence="4">
    <location>
        <begin position="226"/>
        <end position="303"/>
    </location>
</feature>
<feature type="domain" description="HARP 2" evidence="4">
    <location>
        <begin position="327"/>
        <end position="398"/>
    </location>
</feature>
<feature type="domain" description="Helicase ATP-binding" evidence="2">
    <location>
        <begin position="445"/>
        <end position="600"/>
    </location>
</feature>
<feature type="domain" description="Helicase C-terminal" evidence="3">
    <location>
        <begin position="716"/>
        <end position="869"/>
    </location>
</feature>
<feature type="region of interest" description="Disordered" evidence="5">
    <location>
        <begin position="1"/>
        <end position="20"/>
    </location>
</feature>
<feature type="region of interest" description="Mediates interaction with RPA2" evidence="16">
    <location>
        <begin position="5"/>
        <end position="30"/>
    </location>
</feature>
<feature type="region of interest" description="Disordered" evidence="5">
    <location>
        <begin position="27"/>
        <end position="238"/>
    </location>
</feature>
<feature type="region of interest" description="Disordered" evidence="5">
    <location>
        <begin position="904"/>
        <end position="934"/>
    </location>
</feature>
<feature type="coiled-coil region" evidence="1">
    <location>
        <begin position="3"/>
        <end position="34"/>
    </location>
</feature>
<feature type="short sequence motif" description="DESH box">
    <location>
        <begin position="549"/>
        <end position="552"/>
    </location>
</feature>
<feature type="short sequence motif" description="Nuclear localization signal" evidence="11">
    <location>
        <begin position="644"/>
        <end position="661"/>
    </location>
</feature>
<feature type="compositionally biased region" description="Basic and acidic residues" evidence="5">
    <location>
        <begin position="7"/>
        <end position="20"/>
    </location>
</feature>
<feature type="compositionally biased region" description="Polar residues" evidence="5">
    <location>
        <begin position="72"/>
        <end position="83"/>
    </location>
</feature>
<feature type="compositionally biased region" description="Polar residues" evidence="5">
    <location>
        <begin position="171"/>
        <end position="183"/>
    </location>
</feature>
<feature type="compositionally biased region" description="Polar residues" evidence="5">
    <location>
        <begin position="197"/>
        <end position="238"/>
    </location>
</feature>
<feature type="compositionally biased region" description="Low complexity" evidence="5">
    <location>
        <begin position="909"/>
        <end position="919"/>
    </location>
</feature>
<feature type="compositionally biased region" description="Polar residues" evidence="5">
    <location>
        <begin position="920"/>
        <end position="934"/>
    </location>
</feature>
<feature type="binding site" evidence="2">
    <location>
        <begin position="458"/>
        <end position="465"/>
    </location>
    <ligand>
        <name>ATP</name>
        <dbReference type="ChEBI" id="CHEBI:30616"/>
    </ligand>
</feature>
<feature type="modified residue" description="N-acetylserine" evidence="24">
    <location>
        <position position="2"/>
    </location>
</feature>
<feature type="modified residue" description="Phosphoserine" evidence="25 26">
    <location>
        <position position="112"/>
    </location>
</feature>
<feature type="modified residue" description="Phosphoserine" evidence="25">
    <location>
        <position position="123"/>
    </location>
</feature>
<feature type="modified residue" description="Phosphoserine" evidence="25">
    <location>
        <position position="129"/>
    </location>
</feature>
<feature type="modified residue" description="Phosphoserine" evidence="23">
    <location>
        <position position="151"/>
    </location>
</feature>
<feature type="modified residue" description="Phosphoserine" evidence="25">
    <location>
        <position position="198"/>
    </location>
</feature>
<feature type="sequence variant" id="VAR_038370" description="In dbSNP:rs17851400." evidence="9">
    <original>A</original>
    <variation>G</variation>
    <location>
        <position position="22"/>
    </location>
</feature>
<feature type="sequence variant" id="VAR_021363" description="In dbSNP:rs2066524.">
    <original>A</original>
    <variation>T</variation>
    <location>
        <position position="43"/>
    </location>
</feature>
<feature type="sequence variant" id="VAR_021364" description="In dbSNP:rs11555797.">
    <original>R</original>
    <variation>H</variation>
    <location>
        <position position="114"/>
    </location>
</feature>
<feature type="sequence variant" id="VAR_021366" description="In dbSNP:rs6734114.">
    <original>I</original>
    <variation>F</variation>
    <location>
        <position position="207"/>
    </location>
</feature>
<feature type="sequence variant" id="VAR_021367" description="In dbSNP:rs2066522.">
    <original>S</original>
    <variation>R</variation>
    <location>
        <position position="315"/>
    </location>
</feature>
<feature type="sequence variant" id="VAR_021368" description="In dbSNP:rs2066518." evidence="8 9">
    <original>E</original>
    <variation>Q</variation>
    <location>
        <position position="377"/>
    </location>
</feature>
<feature type="sequence variant" id="VAR_021369" description="In dbSNP:rs2066520.">
    <original>D</original>
    <variation>V</variation>
    <location>
        <position position="424"/>
    </location>
</feature>
<feature type="sequence variant" id="VAR_036026" description="In a breast cancer sample; somatic mutation." evidence="10">
    <original>L</original>
    <variation>V</variation>
    <location>
        <position position="432"/>
    </location>
</feature>
<feature type="sequence variant" id="VAR_021370" description="In SIOD; aggregates in the nucleus; decreased chromatin binding." evidence="7 11">
    <original>A</original>
    <variation>P</variation>
    <location>
        <position position="468"/>
    </location>
</feature>
<feature type="sequence variant" id="VAR_021371" description="In SIOD; increased ATPase activity; aggregates in the nucleus; dbSNP:rs119473036." evidence="7 11">
    <original>I</original>
    <variation>N</variation>
    <location>
        <position position="548"/>
    </location>
</feature>
<feature type="sequence variant" id="VAR_021372" description="In SIOD; increased ATPase activity; aggregates in the nucleus; decreased chromatin binding." evidence="7 11">
    <original>S</original>
    <variation>L</variation>
    <location>
        <position position="579"/>
    </location>
</feature>
<feature type="sequence variant" id="VAR_021373" description="In SIOD; decreased ATPase activity; impairs without abolishing annealing helicase activity; no effect on specific binding to fork DNA; no effect on recruitment to sites of DNA damage; decreased chromatin binding; aggregates in the nucleus; dbSNP:rs119473038." evidence="7 11 12 14">
    <original>R</original>
    <variation>W</variation>
    <location>
        <position position="586"/>
    </location>
</feature>
<feature type="sequence variant" id="VAR_021374" description="In SIOD; decreased ATPase activity; cytoplasmic location; dbSNP:rs1313658611." evidence="7 11">
    <original>R</original>
    <variation>W</variation>
    <location>
        <position position="644"/>
    </location>
</feature>
<feature type="sequence variant" id="VAR_021375" description="In SIOD; decreased ATPase activity; cytoplasmic location; dbSNP:rs119473037." evidence="7">
    <original>R</original>
    <variation>C</variation>
    <location>
        <position position="645"/>
    </location>
</feature>
<feature type="sequence variant" id="VAR_021376" description="In SIOD; increased ATPase activity; aggregates in the nucleus." evidence="7 11">
    <original>K</original>
    <variation>Q</variation>
    <location>
        <position position="647"/>
    </location>
</feature>
<feature type="sequence variant" id="VAR_021377" description="In SIOD; decreased ATPase activity; no effect on nuclear location." evidence="7 11">
    <original>K</original>
    <variation>T</variation>
    <location>
        <position position="647"/>
    </location>
</feature>
<feature type="sequence variant" id="VAR_021378" description="In dbSNP:rs2066523.">
    <original>D</original>
    <variation>N</variation>
    <location>
        <position position="649"/>
    </location>
</feature>
<feature type="sequence variant" id="VAR_021379" description="In SIOD; increased ATPase activity; aggregates in the nucleus; decreased chromatin binding; dbSNP:rs200644381." evidence="7 11">
    <original>T</original>
    <variation>I</variation>
    <location>
        <position position="705"/>
    </location>
</feature>
<feature type="sequence variant" id="VAR_021380" description="In dbSNP:rs2271336.">
    <original>T</original>
    <variation>M</variation>
    <location>
        <position position="742"/>
    </location>
</feature>
<feature type="sequence variant" id="VAR_021381" description="In SIOD; increased ATPase activity; abolishes annealing helicase activity; no effect on specific binding to fork DNA; no effect on recruitment to sites of DNA damage; aggregates in the nucleus; decreased chromatin binding; dbSNP:rs267607071." evidence="7 11 12 14">
    <original>R</original>
    <variation>Q</variation>
    <location>
        <position position="764"/>
    </location>
</feature>
<feature type="sequence variant" id="VAR_021382" description="In SIOD; decreased ATPase activity; aggregates in the nucleus; decreased chromatin binding; dbSNP:rs200666300." evidence="7 11">
    <original>R</original>
    <variation>H</variation>
    <location>
        <position position="820"/>
    </location>
</feature>
<feature type="mutagenesis site" description="Decreases interaction with RPA2." evidence="16">
    <original>L</original>
    <variation>A</variation>
    <location>
        <position position="5"/>
    </location>
</feature>
<feature type="mutagenesis site" description="Decreases interaction with RPA2." evidence="16">
    <original>Q</original>
    <variation>A</variation>
    <location>
        <position position="9"/>
    </location>
</feature>
<feature type="mutagenesis site" description="Decreases interaction with RPA2." evidence="16">
    <original>KI</original>
    <variation>AA</variation>
    <location>
        <begin position="12"/>
        <end position="13"/>
    </location>
</feature>
<feature type="mutagenesis site" description="Decreases interaction with RPA2." evidence="16">
    <original>NR</original>
    <variation>AA</variation>
    <location>
        <begin position="16"/>
        <end position="17"/>
    </location>
</feature>
<feature type="mutagenesis site" description="Loss of interaction with RPA2 and impaired recruitment by the RPA complex to sites of DNA damage." evidence="14 16">
    <original>RQK</original>
    <variation>AAA</variation>
    <location>
        <begin position="17"/>
        <end position="19"/>
    </location>
</feature>
<feature type="mutagenesis site" description="Decreases interaction with RPA2." evidence="16">
    <original>AL</original>
    <variation>SS</variation>
    <location>
        <begin position="20"/>
        <end position="21"/>
    </location>
</feature>
<feature type="mutagenesis site" description="Decreases interaction with RPA2." evidence="16">
    <original>RR</original>
    <variation>AA</variation>
    <location>
        <begin position="23"/>
        <end position="24"/>
    </location>
</feature>
<feature type="mutagenesis site" description="Decreases interaction with RPA2." evidence="16">
    <original>K</original>
    <variation>A</variation>
    <location>
        <position position="27"/>
    </location>
</feature>
<feature type="sequence conflict" description="In Ref. 1; AAF24984." evidence="20" ref="1">
    <original>A</original>
    <variation>T</variation>
    <location>
        <position position="118"/>
    </location>
</feature>
<feature type="sequence conflict" description="In Ref. 1; AAF24984." evidence="20" ref="1">
    <original>C</original>
    <variation>G</variation>
    <location>
        <position position="335"/>
    </location>
</feature>
<feature type="sequence conflict" description="In Ref. 7; BAA90955." evidence="20" ref="7">
    <original>E</original>
    <variation>K</variation>
    <location>
        <position position="344"/>
    </location>
</feature>
<feature type="sequence conflict" description="In Ref. 1; AAF24984." evidence="20" ref="1">
    <original>I</original>
    <variation>M</variation>
    <location>
        <position position="882"/>
    </location>
</feature>
<feature type="sequence conflict" description="In Ref. 1; AAF24984." evidence="20" ref="1">
    <original>L</original>
    <variation>V</variation>
    <location>
        <position position="900"/>
    </location>
</feature>
<feature type="sequence conflict" description="In Ref. 1; AAF24984." evidence="20" ref="1">
    <original>A</original>
    <variation>G</variation>
    <location>
        <position position="911"/>
    </location>
</feature>
<feature type="helix" evidence="27">
    <location>
        <begin position="7"/>
        <end position="29"/>
    </location>
</feature>
<proteinExistence type="evidence at protein level"/>
<name>SMAL1_HUMAN</name>
<protein>
    <recommendedName>
        <fullName evidence="20">SWI/SNF-related matrix-associated actin-dependent regulator of chromatin subfamily A-like protein 1</fullName>
        <ecNumber evidence="11">3.6.4.-</ecNumber>
    </recommendedName>
    <alternativeName>
        <fullName>HepA-related protein</fullName>
        <shortName evidence="17 18 19">hHARP</shortName>
    </alternativeName>
    <alternativeName>
        <fullName>Sucrose nonfermenting protein 2-like 1</fullName>
    </alternativeName>
</protein>
<reference key="1">
    <citation type="journal article" date="2000" name="Genomics">
        <title>Cloning and characterization of HARP/SMARCAL1: a prokaryotic HepA-related SNF2 helicase protein from human and mouse.</title>
        <authorList>
            <person name="Coleman M.A."/>
            <person name="Eisen J.A."/>
            <person name="Mohrenweiser H.W."/>
        </authorList>
    </citation>
    <scope>NUCLEOTIDE SEQUENCE [GENOMIC DNA / MRNA]</scope>
    <scope>TISSUE SPECIFICITY</scope>
</reference>
<reference key="2">
    <citation type="journal article" date="2002" name="Nat. Genet.">
        <title>Mutant chromatin remodeling protein SMARCAL1 causes Schimke immuno-osseous dysplasia.</title>
        <authorList>
            <person name="Boerkoel C.F."/>
            <person name="Takashima H."/>
            <person name="John J."/>
            <person name="Yan J."/>
            <person name="Stankiewicz P."/>
            <person name="Rosenbarker L."/>
            <person name="Andre J.-L."/>
            <person name="Bogdanovic R."/>
            <person name="Burguet A."/>
            <person name="Cockfield S."/>
            <person name="Cordeiro I."/>
            <person name="Frund S."/>
            <person name="Illies F."/>
            <person name="Joseph M."/>
            <person name="Kaitila I."/>
            <person name="Lama G."/>
            <person name="Loirat C."/>
            <person name="McLeod D.R."/>
            <person name="Milford D.V."/>
            <person name="Petty E.M."/>
            <person name="Rodrigo F."/>
            <person name="Saraiva J.M."/>
            <person name="Schmidt B."/>
            <person name="Smith G.C."/>
            <person name="Spranger J."/>
            <person name="Stein A."/>
            <person name="Thiele H."/>
            <person name="Tizard J."/>
            <person name="Weksberg R."/>
            <person name="Lupski J.R."/>
            <person name="Stockton D.W."/>
        </authorList>
    </citation>
    <scope>NUCLEOTIDE SEQUENCE [MRNA]</scope>
    <scope>TISSUE SPECIFICITY</scope>
    <scope>VARIANTS SIOD PRO-468; ASN-548; LEU-579; TRP-586; TRP-644; CYS-645; GLN-647; THR-647; ILE-705; GLN-764 AND HIS-820</scope>
</reference>
<reference key="3">
    <citation type="journal article" date="2005" name="Nature">
        <title>Generation and annotation of the DNA sequences of human chromosomes 2 and 4.</title>
        <authorList>
            <person name="Hillier L.W."/>
            <person name="Graves T.A."/>
            <person name="Fulton R.S."/>
            <person name="Fulton L.A."/>
            <person name="Pepin K.H."/>
            <person name="Minx P."/>
            <person name="Wagner-McPherson C."/>
            <person name="Layman D."/>
            <person name="Wylie K."/>
            <person name="Sekhon M."/>
            <person name="Becker M.C."/>
            <person name="Fewell G.A."/>
            <person name="Delehaunty K.D."/>
            <person name="Miner T.L."/>
            <person name="Nash W.E."/>
            <person name="Kremitzki C."/>
            <person name="Oddy L."/>
            <person name="Du H."/>
            <person name="Sun H."/>
            <person name="Bradshaw-Cordum H."/>
            <person name="Ali J."/>
            <person name="Carter J."/>
            <person name="Cordes M."/>
            <person name="Harris A."/>
            <person name="Isak A."/>
            <person name="van Brunt A."/>
            <person name="Nguyen C."/>
            <person name="Du F."/>
            <person name="Courtney L."/>
            <person name="Kalicki J."/>
            <person name="Ozersky P."/>
            <person name="Abbott S."/>
            <person name="Armstrong J."/>
            <person name="Belter E.A."/>
            <person name="Caruso L."/>
            <person name="Cedroni M."/>
            <person name="Cotton M."/>
            <person name="Davidson T."/>
            <person name="Desai A."/>
            <person name="Elliott G."/>
            <person name="Erb T."/>
            <person name="Fronick C."/>
            <person name="Gaige T."/>
            <person name="Haakenson W."/>
            <person name="Haglund K."/>
            <person name="Holmes A."/>
            <person name="Harkins R."/>
            <person name="Kim K."/>
            <person name="Kruchowski S.S."/>
            <person name="Strong C.M."/>
            <person name="Grewal N."/>
            <person name="Goyea E."/>
            <person name="Hou S."/>
            <person name="Levy A."/>
            <person name="Martinka S."/>
            <person name="Mead K."/>
            <person name="McLellan M.D."/>
            <person name="Meyer R."/>
            <person name="Randall-Maher J."/>
            <person name="Tomlinson C."/>
            <person name="Dauphin-Kohlberg S."/>
            <person name="Kozlowicz-Reilly A."/>
            <person name="Shah N."/>
            <person name="Swearengen-Shahid S."/>
            <person name="Snider J."/>
            <person name="Strong J.T."/>
            <person name="Thompson J."/>
            <person name="Yoakum M."/>
            <person name="Leonard S."/>
            <person name="Pearman C."/>
            <person name="Trani L."/>
            <person name="Radionenko M."/>
            <person name="Waligorski J.E."/>
            <person name="Wang C."/>
            <person name="Rock S.M."/>
            <person name="Tin-Wollam A.-M."/>
            <person name="Maupin R."/>
            <person name="Latreille P."/>
            <person name="Wendl M.C."/>
            <person name="Yang S.-P."/>
            <person name="Pohl C."/>
            <person name="Wallis J.W."/>
            <person name="Spieth J."/>
            <person name="Bieri T.A."/>
            <person name="Berkowicz N."/>
            <person name="Nelson J.O."/>
            <person name="Osborne J."/>
            <person name="Ding L."/>
            <person name="Meyer R."/>
            <person name="Sabo A."/>
            <person name="Shotland Y."/>
            <person name="Sinha P."/>
            <person name="Wohldmann P.E."/>
            <person name="Cook L.L."/>
            <person name="Hickenbotham M.T."/>
            <person name="Eldred J."/>
            <person name="Williams D."/>
            <person name="Jones T.A."/>
            <person name="She X."/>
            <person name="Ciccarelli F.D."/>
            <person name="Izaurralde E."/>
            <person name="Taylor J."/>
            <person name="Schmutz J."/>
            <person name="Myers R.M."/>
            <person name="Cox D.R."/>
            <person name="Huang X."/>
            <person name="McPherson J.D."/>
            <person name="Mardis E.R."/>
            <person name="Clifton S.W."/>
            <person name="Warren W.C."/>
            <person name="Chinwalla A.T."/>
            <person name="Eddy S.R."/>
            <person name="Marra M.A."/>
            <person name="Ovcharenko I."/>
            <person name="Furey T.S."/>
            <person name="Miller W."/>
            <person name="Eichler E.E."/>
            <person name="Bork P."/>
            <person name="Suyama M."/>
            <person name="Torrents D."/>
            <person name="Waterston R.H."/>
            <person name="Wilson R.K."/>
        </authorList>
    </citation>
    <scope>NUCLEOTIDE SEQUENCE [LARGE SCALE GENOMIC DNA]</scope>
</reference>
<reference key="4">
    <citation type="submission" date="2005-07" db="EMBL/GenBank/DDBJ databases">
        <authorList>
            <person name="Mural R.J."/>
            <person name="Istrail S."/>
            <person name="Sutton G.G."/>
            <person name="Florea L."/>
            <person name="Halpern A.L."/>
            <person name="Mobarry C.M."/>
            <person name="Lippert R."/>
            <person name="Walenz B."/>
            <person name="Shatkay H."/>
            <person name="Dew I."/>
            <person name="Miller J.R."/>
            <person name="Flanigan M.J."/>
            <person name="Edwards N.J."/>
            <person name="Bolanos R."/>
            <person name="Fasulo D."/>
            <person name="Halldorsson B.V."/>
            <person name="Hannenhalli S."/>
            <person name="Turner R."/>
            <person name="Yooseph S."/>
            <person name="Lu F."/>
            <person name="Nusskern D.R."/>
            <person name="Shue B.C."/>
            <person name="Zheng X.H."/>
            <person name="Zhong F."/>
            <person name="Delcher A.L."/>
            <person name="Huson D.H."/>
            <person name="Kravitz S.A."/>
            <person name="Mouchard L."/>
            <person name="Reinert K."/>
            <person name="Remington K.A."/>
            <person name="Clark A.G."/>
            <person name="Waterman M.S."/>
            <person name="Eichler E.E."/>
            <person name="Adams M.D."/>
            <person name="Hunkapiller M.W."/>
            <person name="Myers E.W."/>
            <person name="Venter J.C."/>
        </authorList>
    </citation>
    <scope>NUCLEOTIDE SEQUENCE [LARGE SCALE GENOMIC DNA]</scope>
</reference>
<reference key="5">
    <citation type="journal article" date="2004" name="Genome Res.">
        <title>The status, quality, and expansion of the NIH full-length cDNA project: the Mammalian Gene Collection (MGC).</title>
        <authorList>
            <consortium name="The MGC Project Team"/>
        </authorList>
    </citation>
    <scope>NUCLEOTIDE SEQUENCE [LARGE SCALE MRNA]</scope>
    <scope>VARIANTS GLY-22 AND GLN-377</scope>
    <source>
        <tissue>Lung</tissue>
        <tissue>Lymph</tissue>
    </source>
</reference>
<reference key="6">
    <citation type="journal article" date="2007" name="BMC Genomics">
        <title>The full-ORF clone resource of the German cDNA consortium.</title>
        <authorList>
            <person name="Bechtel S."/>
            <person name="Rosenfelder H."/>
            <person name="Duda A."/>
            <person name="Schmidt C.P."/>
            <person name="Ernst U."/>
            <person name="Wellenreuther R."/>
            <person name="Mehrle A."/>
            <person name="Schuster C."/>
            <person name="Bahr A."/>
            <person name="Bloecker H."/>
            <person name="Heubner D."/>
            <person name="Hoerlein A."/>
            <person name="Michel G."/>
            <person name="Wedler H."/>
            <person name="Koehrer K."/>
            <person name="Ottenwaelder B."/>
            <person name="Poustka A."/>
            <person name="Wiemann S."/>
            <person name="Schupp I."/>
        </authorList>
    </citation>
    <scope>NUCLEOTIDE SEQUENCE [LARGE SCALE MRNA] OF 147-954</scope>
    <source>
        <tissue>Testis</tissue>
    </source>
</reference>
<reference key="7">
    <citation type="journal article" date="2004" name="Nat. Genet.">
        <title>Complete sequencing and characterization of 21,243 full-length human cDNAs.</title>
        <authorList>
            <person name="Ota T."/>
            <person name="Suzuki Y."/>
            <person name="Nishikawa T."/>
            <person name="Otsuki T."/>
            <person name="Sugiyama T."/>
            <person name="Irie R."/>
            <person name="Wakamatsu A."/>
            <person name="Hayashi K."/>
            <person name="Sato H."/>
            <person name="Nagai K."/>
            <person name="Kimura K."/>
            <person name="Makita H."/>
            <person name="Sekine M."/>
            <person name="Obayashi M."/>
            <person name="Nishi T."/>
            <person name="Shibahara T."/>
            <person name="Tanaka T."/>
            <person name="Ishii S."/>
            <person name="Yamamoto J."/>
            <person name="Saito K."/>
            <person name="Kawai Y."/>
            <person name="Isono Y."/>
            <person name="Nakamura Y."/>
            <person name="Nagahari K."/>
            <person name="Murakami K."/>
            <person name="Yasuda T."/>
            <person name="Iwayanagi T."/>
            <person name="Wagatsuma M."/>
            <person name="Shiratori A."/>
            <person name="Sudo H."/>
            <person name="Hosoiri T."/>
            <person name="Kaku Y."/>
            <person name="Kodaira H."/>
            <person name="Kondo H."/>
            <person name="Sugawara M."/>
            <person name="Takahashi M."/>
            <person name="Kanda K."/>
            <person name="Yokoi T."/>
            <person name="Furuya T."/>
            <person name="Kikkawa E."/>
            <person name="Omura Y."/>
            <person name="Abe K."/>
            <person name="Kamihara K."/>
            <person name="Katsuta N."/>
            <person name="Sato K."/>
            <person name="Tanikawa M."/>
            <person name="Yamazaki M."/>
            <person name="Ninomiya K."/>
            <person name="Ishibashi T."/>
            <person name="Yamashita H."/>
            <person name="Murakawa K."/>
            <person name="Fujimori K."/>
            <person name="Tanai H."/>
            <person name="Kimata M."/>
            <person name="Watanabe M."/>
            <person name="Hiraoka S."/>
            <person name="Chiba Y."/>
            <person name="Ishida S."/>
            <person name="Ono Y."/>
            <person name="Takiguchi S."/>
            <person name="Watanabe S."/>
            <person name="Yosida M."/>
            <person name="Hotuta T."/>
            <person name="Kusano J."/>
            <person name="Kanehori K."/>
            <person name="Takahashi-Fujii A."/>
            <person name="Hara H."/>
            <person name="Tanase T.-O."/>
            <person name="Nomura Y."/>
            <person name="Togiya S."/>
            <person name="Komai F."/>
            <person name="Hara R."/>
            <person name="Takeuchi K."/>
            <person name="Arita M."/>
            <person name="Imose N."/>
            <person name="Musashino K."/>
            <person name="Yuuki H."/>
            <person name="Oshima A."/>
            <person name="Sasaki N."/>
            <person name="Aotsuka S."/>
            <person name="Yoshikawa Y."/>
            <person name="Matsunawa H."/>
            <person name="Ichihara T."/>
            <person name="Shiohata N."/>
            <person name="Sano S."/>
            <person name="Moriya S."/>
            <person name="Momiyama H."/>
            <person name="Satoh N."/>
            <person name="Takami S."/>
            <person name="Terashima Y."/>
            <person name="Suzuki O."/>
            <person name="Nakagawa S."/>
            <person name="Senoh A."/>
            <person name="Mizoguchi H."/>
            <person name="Goto Y."/>
            <person name="Shimizu F."/>
            <person name="Wakebe H."/>
            <person name="Hishigaki H."/>
            <person name="Watanabe T."/>
            <person name="Sugiyama A."/>
            <person name="Takemoto M."/>
            <person name="Kawakami B."/>
            <person name="Yamazaki M."/>
            <person name="Watanabe K."/>
            <person name="Kumagai A."/>
            <person name="Itakura S."/>
            <person name="Fukuzumi Y."/>
            <person name="Fujimori Y."/>
            <person name="Komiyama M."/>
            <person name="Tashiro H."/>
            <person name="Tanigami A."/>
            <person name="Fujiwara T."/>
            <person name="Ono T."/>
            <person name="Yamada K."/>
            <person name="Fujii Y."/>
            <person name="Ozaki K."/>
            <person name="Hirao M."/>
            <person name="Ohmori Y."/>
            <person name="Kawabata A."/>
            <person name="Hikiji T."/>
            <person name="Kobatake N."/>
            <person name="Inagaki H."/>
            <person name="Ikema Y."/>
            <person name="Okamoto S."/>
            <person name="Okitani R."/>
            <person name="Kawakami T."/>
            <person name="Noguchi S."/>
            <person name="Itoh T."/>
            <person name="Shigeta K."/>
            <person name="Senba T."/>
            <person name="Matsumura K."/>
            <person name="Nakajima Y."/>
            <person name="Mizuno T."/>
            <person name="Morinaga M."/>
            <person name="Sasaki M."/>
            <person name="Togashi T."/>
            <person name="Oyama M."/>
            <person name="Hata H."/>
            <person name="Watanabe M."/>
            <person name="Komatsu T."/>
            <person name="Mizushima-Sugano J."/>
            <person name="Satoh T."/>
            <person name="Shirai Y."/>
            <person name="Takahashi Y."/>
            <person name="Nakagawa K."/>
            <person name="Okumura K."/>
            <person name="Nagase T."/>
            <person name="Nomura N."/>
            <person name="Kikuchi H."/>
            <person name="Masuho Y."/>
            <person name="Yamashita R."/>
            <person name="Nakai K."/>
            <person name="Yada T."/>
            <person name="Nakamura Y."/>
            <person name="Ohara O."/>
            <person name="Isogai T."/>
            <person name="Sugano S."/>
        </authorList>
    </citation>
    <scope>NUCLEOTIDE SEQUENCE [LARGE SCALE MRNA] OF 335-954</scope>
    <scope>VARIANT GLN-377</scope>
</reference>
<reference key="8">
    <citation type="journal article" date="2008" name="Proc. Natl. Acad. Sci. U.S.A.">
        <title>A quantitative atlas of mitotic phosphorylation.</title>
        <authorList>
            <person name="Dephoure N."/>
            <person name="Zhou C."/>
            <person name="Villen J."/>
            <person name="Beausoleil S.A."/>
            <person name="Bakalarski C.E."/>
            <person name="Elledge S.J."/>
            <person name="Gygi S.P."/>
        </authorList>
    </citation>
    <scope>IDENTIFICATION BY MASS SPECTROMETRY [LARGE SCALE ANALYSIS]</scope>
    <source>
        <tissue>Cervix carcinoma</tissue>
    </source>
</reference>
<reference key="9">
    <citation type="journal article" date="2009" name="Genes Dev.">
        <title>The annealing helicase HARP is recruited to DNA repair sites via an interaction with RPA.</title>
        <authorList>
            <person name="Yusufzai T."/>
            <person name="Kong X."/>
            <person name="Yokomori K."/>
            <person name="Kadonaga J.T."/>
        </authorList>
    </citation>
    <scope>INTERACTION WITH RPA2 AND THE RPA COMPLEX</scope>
    <scope>REGION</scope>
    <scope>SUBCELLULAR LOCATION</scope>
</reference>
<reference key="10">
    <citation type="journal article" date="2009" name="Genes Dev.">
        <title>The annealing helicase SMARCAL1 maintains genome integrity at stalled replication forks.</title>
        <authorList>
            <person name="Bansbach C.E."/>
            <person name="Betous R."/>
            <person name="Lovejoy C.A."/>
            <person name="Glick G.G."/>
            <person name="Cortez D."/>
        </authorList>
    </citation>
    <scope>FUNCTION IN DNA DAMAGE RESPONSE</scope>
    <scope>INTERACTION WITH RPA2</scope>
    <scope>PHOSPHORYLATION</scope>
</reference>
<reference key="11">
    <citation type="journal article" date="2009" name="Genes Dev.">
        <title>The SIOD disorder protein SMARCAL1 is an RPA-interacting protein involved in replication fork restart.</title>
        <authorList>
            <person name="Ciccia A."/>
            <person name="Bredemeyer A.L."/>
            <person name="Sowa M.E."/>
            <person name="Terret M.E."/>
            <person name="Jallepalli P.V."/>
            <person name="Harper J.W."/>
            <person name="Elledge S.J."/>
        </authorList>
    </citation>
    <scope>FUNCTION IN DNA REPLICATION</scope>
    <scope>INTERACTION WITH RPA2 AND THE RPA COMPLEX</scope>
    <scope>REGION</scope>
    <scope>SUBCELLULAR LOCATION</scope>
    <scope>MUTAGENESIS OF 17-ARG--LYS-19</scope>
    <scope>CHARACTERIZATION OF VARIANTS SIOD TRP-586 AND GLN-764</scope>
</reference>
<reference key="12">
    <citation type="journal article" date="2010" name="Sci. Signal.">
        <title>Quantitative phosphoproteomics reveals widespread full phosphorylation site occupancy during mitosis.</title>
        <authorList>
            <person name="Olsen J.V."/>
            <person name="Vermeulen M."/>
            <person name="Santamaria A."/>
            <person name="Kumar C."/>
            <person name="Miller M.L."/>
            <person name="Jensen L.J."/>
            <person name="Gnad F."/>
            <person name="Cox J."/>
            <person name="Jensen T.S."/>
            <person name="Nigg E.A."/>
            <person name="Brunak S."/>
            <person name="Mann M."/>
        </authorList>
    </citation>
    <scope>PHOSPHORYLATION [LARGE SCALE ANALYSIS] AT SER-151</scope>
    <scope>IDENTIFICATION BY MASS SPECTROMETRY [LARGE SCALE ANALYSIS]</scope>
    <source>
        <tissue>Cervix carcinoma</tissue>
    </source>
</reference>
<reference key="13">
    <citation type="journal article" date="2011" name="BMC Syst. Biol.">
        <title>Initial characterization of the human central proteome.</title>
        <authorList>
            <person name="Burkard T.R."/>
            <person name="Planyavsky M."/>
            <person name="Kaupe I."/>
            <person name="Breitwieser F.P."/>
            <person name="Buerckstuemmer T."/>
            <person name="Bennett K.L."/>
            <person name="Superti-Furga G."/>
            <person name="Colinge J."/>
        </authorList>
    </citation>
    <scope>IDENTIFICATION BY MASS SPECTROMETRY [LARGE SCALE ANALYSIS]</scope>
</reference>
<reference key="14">
    <citation type="journal article" date="2012" name="Proc. Natl. Acad. Sci. U.S.A.">
        <title>N-terminal acetylome analyses and functional insights of the N-terminal acetyltransferase NatB.</title>
        <authorList>
            <person name="Van Damme P."/>
            <person name="Lasa M."/>
            <person name="Polevoda B."/>
            <person name="Gazquez C."/>
            <person name="Elosegui-Artola A."/>
            <person name="Kim D.S."/>
            <person name="De Juan-Pardo E."/>
            <person name="Demeyer K."/>
            <person name="Hole K."/>
            <person name="Larrea E."/>
            <person name="Timmerman E."/>
            <person name="Prieto J."/>
            <person name="Arnesen T."/>
            <person name="Sherman F."/>
            <person name="Gevaert K."/>
            <person name="Aldabe R."/>
        </authorList>
    </citation>
    <scope>ACETYLATION [LARGE SCALE ANALYSIS] AT SER-2</scope>
    <scope>CLEAVAGE OF INITIATOR METHIONINE [LARGE SCALE ANALYSIS]</scope>
    <scope>IDENTIFICATION BY MASS SPECTROMETRY [LARGE SCALE ANALYSIS]</scope>
</reference>
<reference key="15">
    <citation type="journal article" date="2013" name="J. Proteome Res.">
        <title>Toward a comprehensive characterization of a human cancer cell phosphoproteome.</title>
        <authorList>
            <person name="Zhou H."/>
            <person name="Di Palma S."/>
            <person name="Preisinger C."/>
            <person name="Peng M."/>
            <person name="Polat A.N."/>
            <person name="Heck A.J."/>
            <person name="Mohammed S."/>
        </authorList>
    </citation>
    <scope>PHOSPHORYLATION [LARGE SCALE ANALYSIS] AT SER-112; SER-123; SER-129 AND SER-198</scope>
    <scope>IDENTIFICATION BY MASS SPECTROMETRY [LARGE SCALE ANALYSIS]</scope>
    <source>
        <tissue>Erythroleukemia</tissue>
    </source>
</reference>
<reference key="16">
    <citation type="journal article" date="2014" name="J. Proteomics">
        <title>An enzyme assisted RP-RPLC approach for in-depth analysis of human liver phosphoproteome.</title>
        <authorList>
            <person name="Bian Y."/>
            <person name="Song C."/>
            <person name="Cheng K."/>
            <person name="Dong M."/>
            <person name="Wang F."/>
            <person name="Huang J."/>
            <person name="Sun D."/>
            <person name="Wang L."/>
            <person name="Ye M."/>
            <person name="Zou H."/>
        </authorList>
    </citation>
    <scope>PHOSPHORYLATION [LARGE SCALE ANALYSIS] AT SER-112</scope>
    <scope>IDENTIFICATION BY MASS SPECTROMETRY [LARGE SCALE ANALYSIS]</scope>
    <source>
        <tissue>Liver</tissue>
    </source>
</reference>
<reference evidence="22" key="17">
    <citation type="journal article" date="2014" name="FEBS J.">
        <title>Structure of RPA32 bound to the N-terminus of SMARCAL1 redefines the binding interface between RPA32 and its interacting proteins.</title>
        <authorList>
            <person name="Xie S."/>
            <person name="Lu Y."/>
            <person name="Jakoncic J."/>
            <person name="Sun H."/>
            <person name="Xia J."/>
            <person name="Qian C."/>
        </authorList>
    </citation>
    <scope>X-RAY CRYSTALLOGRAPHY (1.95 ANGSTROMS) OF 5-30 IN COMPLEX WITH RPA2</scope>
    <scope>INTERACTION WITH RPA2</scope>
    <scope>MUTAGENESIS OF LEU-5; GLN-9; 12-LYS-ILE-13; 16-ASN-ARG-17; 17-ARG--LYS-19; 20-ALA-LEU-21; 23-ARG-ARG-24 AND LYS-27</scope>
</reference>
<reference key="18">
    <citation type="journal article" date="2006" name="Science">
        <title>The consensus coding sequences of human breast and colorectal cancers.</title>
        <authorList>
            <person name="Sjoeblom T."/>
            <person name="Jones S."/>
            <person name="Wood L.D."/>
            <person name="Parsons D.W."/>
            <person name="Lin J."/>
            <person name="Barber T.D."/>
            <person name="Mandelker D."/>
            <person name="Leary R.J."/>
            <person name="Ptak J."/>
            <person name="Silliman N."/>
            <person name="Szabo S."/>
            <person name="Buckhaults P."/>
            <person name="Farrell C."/>
            <person name="Meeh P."/>
            <person name="Markowitz S.D."/>
            <person name="Willis J."/>
            <person name="Dawson D."/>
            <person name="Willson J.K.V."/>
            <person name="Gazdar A.F."/>
            <person name="Hartigan J."/>
            <person name="Wu L."/>
            <person name="Liu C."/>
            <person name="Parmigiani G."/>
            <person name="Park B.H."/>
            <person name="Bachman K.E."/>
            <person name="Papadopoulos N."/>
            <person name="Vogelstein B."/>
            <person name="Kinzler K.W."/>
            <person name="Velculescu V.E."/>
        </authorList>
    </citation>
    <scope>VARIANT [LARGE SCALE ANALYSIS] VAL-432</scope>
</reference>
<reference key="19">
    <citation type="journal article" date="2008" name="Science">
        <title>HARP is an ATP-driven annealing helicase.</title>
        <authorList>
            <person name="Yusufzai T."/>
            <person name="Kadonaga J.T."/>
        </authorList>
    </citation>
    <scope>CHARACTERIZATION OF VARIANTS SIOD TRP-586 AND GLN-764</scope>
    <scope>FUNCTION</scope>
    <scope>DNA-BINDING</scope>
</reference>
<reference key="20">
    <citation type="journal article" date="2009" name="J. Med. Genet.">
        <title>Schimke immuno-osseous dysplasia: SMARCAL1 loss-of-function and phenotypic correlation.</title>
        <authorList>
            <person name="Elizondo L.I."/>
            <person name="Cho K.S."/>
            <person name="Zhang W."/>
            <person name="Yan J."/>
            <person name="Huang C."/>
            <person name="Huang Y."/>
            <person name="Choi K."/>
            <person name="Sloan E.A."/>
            <person name="Deguchi K."/>
            <person name="Lou S."/>
            <person name="Baradaran-Heravi A."/>
            <person name="Takashima H."/>
            <person name="Luecke T."/>
            <person name="Quiocho F.A."/>
            <person name="Boerkoel C.F."/>
        </authorList>
    </citation>
    <scope>FUNCTION</scope>
    <scope>CATALYTIC ACTIVITY</scope>
    <scope>CHARACTERIZATION OF VARIANTS SIOD PRO-468; ASN-548; LEU-579; TRP-586; TRP-644; GLN-647; THR-647; ILE-705; GLN-764 AND HIS-820</scope>
    <scope>SUBCELLULAR LOCATION</scope>
</reference>
<evidence type="ECO:0000255" key="1"/>
<evidence type="ECO:0000255" key="2">
    <source>
        <dbReference type="PROSITE-ProRule" id="PRU00541"/>
    </source>
</evidence>
<evidence type="ECO:0000255" key="3">
    <source>
        <dbReference type="PROSITE-ProRule" id="PRU00542"/>
    </source>
</evidence>
<evidence type="ECO:0000255" key="4">
    <source>
        <dbReference type="PROSITE-ProRule" id="PRU00800"/>
    </source>
</evidence>
<evidence type="ECO:0000256" key="5">
    <source>
        <dbReference type="SAM" id="MobiDB-lite"/>
    </source>
</evidence>
<evidence type="ECO:0000269" key="6">
    <source>
    </source>
</evidence>
<evidence type="ECO:0000269" key="7">
    <source>
    </source>
</evidence>
<evidence type="ECO:0000269" key="8">
    <source>
    </source>
</evidence>
<evidence type="ECO:0000269" key="9">
    <source>
    </source>
</evidence>
<evidence type="ECO:0000269" key="10">
    <source>
    </source>
</evidence>
<evidence type="ECO:0000269" key="11">
    <source>
    </source>
</evidence>
<evidence type="ECO:0000269" key="12">
    <source>
    </source>
</evidence>
<evidence type="ECO:0000269" key="13">
    <source>
    </source>
</evidence>
<evidence type="ECO:0000269" key="14">
    <source>
    </source>
</evidence>
<evidence type="ECO:0000269" key="15">
    <source>
    </source>
</evidence>
<evidence type="ECO:0000269" key="16">
    <source>
    </source>
</evidence>
<evidence type="ECO:0000303" key="17">
    <source>
    </source>
</evidence>
<evidence type="ECO:0000303" key="18">
    <source>
    </source>
</evidence>
<evidence type="ECO:0000303" key="19">
    <source>
    </source>
</evidence>
<evidence type="ECO:0000305" key="20"/>
<evidence type="ECO:0000312" key="21">
    <source>
        <dbReference type="HGNC" id="HGNC:11102"/>
    </source>
</evidence>
<evidence type="ECO:0007744" key="22">
    <source>
        <dbReference type="PDB" id="4MQV"/>
    </source>
</evidence>
<evidence type="ECO:0007744" key="23">
    <source>
    </source>
</evidence>
<evidence type="ECO:0007744" key="24">
    <source>
    </source>
</evidence>
<evidence type="ECO:0007744" key="25">
    <source>
    </source>
</evidence>
<evidence type="ECO:0007744" key="26">
    <source>
    </source>
</evidence>
<evidence type="ECO:0007829" key="27">
    <source>
        <dbReference type="PDB" id="4MQV"/>
    </source>
</evidence>
<keyword id="KW-0002">3D-structure</keyword>
<keyword id="KW-0007">Acetylation</keyword>
<keyword id="KW-0175">Coiled coil</keyword>
<keyword id="KW-0225">Disease variant</keyword>
<keyword id="KW-0378">Hydrolase</keyword>
<keyword id="KW-0539">Nucleus</keyword>
<keyword id="KW-0597">Phosphoprotein</keyword>
<keyword id="KW-1267">Proteomics identification</keyword>
<keyword id="KW-1185">Reference proteome</keyword>
<keyword id="KW-0677">Repeat</keyword>
<dbReference type="EC" id="3.6.4.-" evidence="11"/>
<dbReference type="EMBL" id="AF082179">
    <property type="protein sequence ID" value="AAF24984.1"/>
    <property type="molecule type" value="mRNA"/>
</dbReference>
<dbReference type="EMBL" id="AF210842">
    <property type="protein sequence ID" value="AAF70454.1"/>
    <property type="molecule type" value="Genomic_DNA"/>
</dbReference>
<dbReference type="EMBL" id="AF210833">
    <property type="protein sequence ID" value="AAF70454.1"/>
    <property type="status" value="JOINED"/>
    <property type="molecule type" value="Genomic_DNA"/>
</dbReference>
<dbReference type="EMBL" id="AF210834">
    <property type="protein sequence ID" value="AAF70454.1"/>
    <property type="status" value="JOINED"/>
    <property type="molecule type" value="Genomic_DNA"/>
</dbReference>
<dbReference type="EMBL" id="AF210835">
    <property type="protein sequence ID" value="AAF70454.1"/>
    <property type="status" value="JOINED"/>
    <property type="molecule type" value="Genomic_DNA"/>
</dbReference>
<dbReference type="EMBL" id="AF210836">
    <property type="protein sequence ID" value="AAF70454.1"/>
    <property type="status" value="JOINED"/>
    <property type="molecule type" value="Genomic_DNA"/>
</dbReference>
<dbReference type="EMBL" id="AF210837">
    <property type="protein sequence ID" value="AAF70454.1"/>
    <property type="status" value="JOINED"/>
    <property type="molecule type" value="Genomic_DNA"/>
</dbReference>
<dbReference type="EMBL" id="AF210838">
    <property type="protein sequence ID" value="AAF70454.1"/>
    <property type="status" value="JOINED"/>
    <property type="molecule type" value="Genomic_DNA"/>
</dbReference>
<dbReference type="EMBL" id="AF210839">
    <property type="protein sequence ID" value="AAF70454.1"/>
    <property type="status" value="JOINED"/>
    <property type="molecule type" value="Genomic_DNA"/>
</dbReference>
<dbReference type="EMBL" id="AF210840">
    <property type="protein sequence ID" value="AAF70454.1"/>
    <property type="status" value="JOINED"/>
    <property type="molecule type" value="Genomic_DNA"/>
</dbReference>
<dbReference type="EMBL" id="AF210841">
    <property type="protein sequence ID" value="AAF70454.1"/>
    <property type="status" value="JOINED"/>
    <property type="molecule type" value="Genomic_DNA"/>
</dbReference>
<dbReference type="EMBL" id="AF432223">
    <property type="protein sequence ID" value="AAL73034.1"/>
    <property type="molecule type" value="mRNA"/>
</dbReference>
<dbReference type="EMBL" id="AC098820">
    <property type="protein sequence ID" value="AAX93097.1"/>
    <property type="molecule type" value="Genomic_DNA"/>
</dbReference>
<dbReference type="EMBL" id="CH471063">
    <property type="protein sequence ID" value="EAW70567.1"/>
    <property type="molecule type" value="Genomic_DNA"/>
</dbReference>
<dbReference type="EMBL" id="BC016482">
    <property type="protein sequence ID" value="AAH16482.1"/>
    <property type="molecule type" value="mRNA"/>
</dbReference>
<dbReference type="EMBL" id="BC043341">
    <property type="protein sequence ID" value="AAH43341.1"/>
    <property type="molecule type" value="mRNA"/>
</dbReference>
<dbReference type="EMBL" id="AL122076">
    <property type="protein sequence ID" value="CAB59251.1"/>
    <property type="molecule type" value="mRNA"/>
</dbReference>
<dbReference type="EMBL" id="AK000117">
    <property type="protein sequence ID" value="BAA90955.1"/>
    <property type="status" value="ALT_INIT"/>
    <property type="molecule type" value="mRNA"/>
</dbReference>
<dbReference type="CCDS" id="CCDS2403.1"/>
<dbReference type="PIR" id="T34557">
    <property type="entry name" value="T34557"/>
</dbReference>
<dbReference type="RefSeq" id="NP_001120679.1">
    <property type="nucleotide sequence ID" value="NM_001127207.2"/>
</dbReference>
<dbReference type="RefSeq" id="NP_054859.2">
    <property type="nucleotide sequence ID" value="NM_014140.3"/>
</dbReference>
<dbReference type="RefSeq" id="XP_005246688.1">
    <property type="nucleotide sequence ID" value="XM_005246631.2"/>
</dbReference>
<dbReference type="RefSeq" id="XP_005246689.1">
    <property type="nucleotide sequence ID" value="XM_005246632.1"/>
</dbReference>
<dbReference type="PDB" id="4MQV">
    <property type="method" value="X-ray"/>
    <property type="resolution" value="1.95 A"/>
    <property type="chains" value="B/D=5-30"/>
</dbReference>
<dbReference type="PDBsum" id="4MQV"/>
<dbReference type="SMR" id="Q9NZC9"/>
<dbReference type="BioGRID" id="119072">
    <property type="interactions" value="49"/>
</dbReference>
<dbReference type="ELM" id="Q9NZC9"/>
<dbReference type="FunCoup" id="Q9NZC9">
    <property type="interactions" value="2988"/>
</dbReference>
<dbReference type="IntAct" id="Q9NZC9">
    <property type="interactions" value="40"/>
</dbReference>
<dbReference type="MINT" id="Q9NZC9"/>
<dbReference type="STRING" id="9606.ENSP00000349823"/>
<dbReference type="GlyConnect" id="2837">
    <property type="glycosylation" value="1 N-Linked glycan (1 site)"/>
</dbReference>
<dbReference type="GlyCosmos" id="Q9NZC9">
    <property type="glycosylation" value="1 site, 1 glycan"/>
</dbReference>
<dbReference type="GlyGen" id="Q9NZC9">
    <property type="glycosylation" value="3 sites, 2 N-linked glycans (2 sites), 1 O-linked glycan (1 site)"/>
</dbReference>
<dbReference type="iPTMnet" id="Q9NZC9"/>
<dbReference type="MetOSite" id="Q9NZC9"/>
<dbReference type="PhosphoSitePlus" id="Q9NZC9"/>
<dbReference type="BioMuta" id="SMARCAL1"/>
<dbReference type="DMDM" id="60390962"/>
<dbReference type="jPOST" id="Q9NZC9"/>
<dbReference type="MassIVE" id="Q9NZC9"/>
<dbReference type="PaxDb" id="9606-ENSP00000349823"/>
<dbReference type="PeptideAtlas" id="Q9NZC9"/>
<dbReference type="ProteomicsDB" id="83371"/>
<dbReference type="Pumba" id="Q9NZC9"/>
<dbReference type="Antibodypedia" id="34237">
    <property type="antibodies" value="209 antibodies from 34 providers"/>
</dbReference>
<dbReference type="DNASU" id="50485"/>
<dbReference type="Ensembl" id="ENST00000357276.9">
    <property type="protein sequence ID" value="ENSP00000349823.4"/>
    <property type="gene ID" value="ENSG00000138375.14"/>
</dbReference>
<dbReference type="Ensembl" id="ENST00000358207.9">
    <property type="protein sequence ID" value="ENSP00000350940.5"/>
    <property type="gene ID" value="ENSG00000138375.14"/>
</dbReference>
<dbReference type="Ensembl" id="ENST00000425815.6">
    <property type="protein sequence ID" value="ENSP00000394410.2"/>
    <property type="gene ID" value="ENSG00000138375.14"/>
</dbReference>
<dbReference type="Ensembl" id="ENST00000430374.6">
    <property type="protein sequence ID" value="ENSP00000405077.2"/>
    <property type="gene ID" value="ENSG00000138375.14"/>
</dbReference>
<dbReference type="Ensembl" id="ENST00000444508.6">
    <property type="protein sequence ID" value="ENSP00000398969.2"/>
    <property type="gene ID" value="ENSG00000138375.14"/>
</dbReference>
<dbReference type="GeneID" id="50485"/>
<dbReference type="KEGG" id="hsa:50485"/>
<dbReference type="MANE-Select" id="ENST00000357276.9">
    <property type="protein sequence ID" value="ENSP00000349823.4"/>
    <property type="RefSeq nucleotide sequence ID" value="NM_014140.4"/>
    <property type="RefSeq protein sequence ID" value="NP_054859.2"/>
</dbReference>
<dbReference type="UCSC" id="uc002vgc.5">
    <property type="organism name" value="human"/>
</dbReference>
<dbReference type="AGR" id="HGNC:11102"/>
<dbReference type="CTD" id="50485"/>
<dbReference type="DisGeNET" id="50485"/>
<dbReference type="GeneCards" id="SMARCAL1"/>
<dbReference type="GeneReviews" id="SMARCAL1"/>
<dbReference type="HGNC" id="HGNC:11102">
    <property type="gene designation" value="SMARCAL1"/>
</dbReference>
<dbReference type="HPA" id="ENSG00000138375">
    <property type="expression patterns" value="Low tissue specificity"/>
</dbReference>
<dbReference type="MalaCards" id="SMARCAL1"/>
<dbReference type="MIM" id="242900">
    <property type="type" value="phenotype"/>
</dbReference>
<dbReference type="MIM" id="606622">
    <property type="type" value="gene"/>
</dbReference>
<dbReference type="neXtProt" id="NX_Q9NZC9"/>
<dbReference type="OpenTargets" id="ENSG00000138375"/>
<dbReference type="Orphanet" id="1830">
    <property type="disease" value="Schimke immuno-osseous dysplasia"/>
</dbReference>
<dbReference type="PharmGKB" id="PA35952"/>
<dbReference type="VEuPathDB" id="HostDB:ENSG00000138375"/>
<dbReference type="eggNOG" id="KOG1000">
    <property type="taxonomic scope" value="Eukaryota"/>
</dbReference>
<dbReference type="GeneTree" id="ENSGT00940000157608"/>
<dbReference type="InParanoid" id="Q9NZC9"/>
<dbReference type="OMA" id="KCVPHAE"/>
<dbReference type="OrthoDB" id="2801544at2759"/>
<dbReference type="PAN-GO" id="Q9NZC9">
    <property type="GO annotations" value="4 GO annotations based on evolutionary models"/>
</dbReference>
<dbReference type="PhylomeDB" id="Q9NZC9"/>
<dbReference type="TreeFam" id="TF106474"/>
<dbReference type="PathwayCommons" id="Q9NZC9"/>
<dbReference type="SignaLink" id="Q9NZC9"/>
<dbReference type="SIGNOR" id="Q9NZC9"/>
<dbReference type="BioGRID-ORCS" id="50485">
    <property type="hits" value="27 hits in 1172 CRISPR screens"/>
</dbReference>
<dbReference type="ChiTaRS" id="SMARCAL1">
    <property type="organism name" value="human"/>
</dbReference>
<dbReference type="GeneWiki" id="SMARCAL1"/>
<dbReference type="GenomeRNAi" id="50485"/>
<dbReference type="Pharos" id="Q9NZC9">
    <property type="development level" value="Tbio"/>
</dbReference>
<dbReference type="PRO" id="PR:Q9NZC9"/>
<dbReference type="Proteomes" id="UP000005640">
    <property type="component" value="Chromosome 2"/>
</dbReference>
<dbReference type="RNAct" id="Q9NZC9">
    <property type="molecule type" value="protein"/>
</dbReference>
<dbReference type="Bgee" id="ENSG00000138375">
    <property type="expression patterns" value="Expressed in primordial germ cell in gonad and 188 other cell types or tissues"/>
</dbReference>
<dbReference type="ExpressionAtlas" id="Q9NZC9">
    <property type="expression patterns" value="baseline and differential"/>
</dbReference>
<dbReference type="GO" id="GO:0043596">
    <property type="term" value="C:nuclear replication fork"/>
    <property type="evidence" value="ECO:0000318"/>
    <property type="project" value="GO_Central"/>
</dbReference>
<dbReference type="GO" id="GO:0005654">
    <property type="term" value="C:nucleoplasm"/>
    <property type="evidence" value="ECO:0000314"/>
    <property type="project" value="HPA"/>
</dbReference>
<dbReference type="GO" id="GO:0005634">
    <property type="term" value="C:nucleus"/>
    <property type="evidence" value="ECO:0000314"/>
    <property type="project" value="UniProtKB"/>
</dbReference>
<dbReference type="GO" id="GO:0035861">
    <property type="term" value="C:site of double-strand break"/>
    <property type="evidence" value="ECO:0000314"/>
    <property type="project" value="UniProtKB"/>
</dbReference>
<dbReference type="GO" id="GO:0005524">
    <property type="term" value="F:ATP binding"/>
    <property type="evidence" value="ECO:0007669"/>
    <property type="project" value="UniProtKB-KW"/>
</dbReference>
<dbReference type="GO" id="GO:0036310">
    <property type="term" value="F:ATP-dependent DNA/DNA annealing activity"/>
    <property type="evidence" value="ECO:0000314"/>
    <property type="project" value="UniProtKB"/>
</dbReference>
<dbReference type="GO" id="GO:0004386">
    <property type="term" value="F:helicase activity"/>
    <property type="evidence" value="ECO:0007669"/>
    <property type="project" value="UniProtKB-KW"/>
</dbReference>
<dbReference type="GO" id="GO:0016787">
    <property type="term" value="F:hydrolase activity"/>
    <property type="evidence" value="ECO:0007669"/>
    <property type="project" value="UniProtKB-KW"/>
</dbReference>
<dbReference type="GO" id="GO:0006974">
    <property type="term" value="P:DNA damage response"/>
    <property type="evidence" value="ECO:0000315"/>
    <property type="project" value="UniProtKB"/>
</dbReference>
<dbReference type="GO" id="GO:0006281">
    <property type="term" value="P:DNA repair"/>
    <property type="evidence" value="ECO:0000318"/>
    <property type="project" value="GO_Central"/>
</dbReference>
<dbReference type="GO" id="GO:0006303">
    <property type="term" value="P:double-strand break repair via nonhomologous end joining"/>
    <property type="evidence" value="ECO:0000315"/>
    <property type="project" value="CACAO"/>
</dbReference>
<dbReference type="GO" id="GO:0006357">
    <property type="term" value="P:regulation of transcription by RNA polymerase II"/>
    <property type="evidence" value="ECO:0000315"/>
    <property type="project" value="UniProtKB"/>
</dbReference>
<dbReference type="GO" id="GO:0031297">
    <property type="term" value="P:replication fork processing"/>
    <property type="evidence" value="ECO:0000315"/>
    <property type="project" value="UniProtKB"/>
</dbReference>
<dbReference type="GO" id="GO:0090656">
    <property type="term" value="P:t-circle formation"/>
    <property type="evidence" value="ECO:0000304"/>
    <property type="project" value="BHF-UCL"/>
</dbReference>
<dbReference type="CDD" id="cd18010">
    <property type="entry name" value="DEXHc_HARP_SMARCAL1"/>
    <property type="match status" value="1"/>
</dbReference>
<dbReference type="CDD" id="cd18793">
    <property type="entry name" value="SF2_C_SNF"/>
    <property type="match status" value="1"/>
</dbReference>
<dbReference type="FunFam" id="3.40.50.300:FF:001036">
    <property type="entry name" value="SWI/SNF related, matrix associated, actin dependent regulator of chromatin, subfamily a like 1"/>
    <property type="match status" value="1"/>
</dbReference>
<dbReference type="FunFam" id="3.40.50.10810:FF:000026">
    <property type="entry name" value="SWI/SNF related, matrix associated, actin dependent regulator of chromatin, subfamily a-like 1"/>
    <property type="match status" value="1"/>
</dbReference>
<dbReference type="Gene3D" id="3.40.50.300">
    <property type="entry name" value="P-loop containing nucleotide triphosphate hydrolases"/>
    <property type="match status" value="1"/>
</dbReference>
<dbReference type="Gene3D" id="3.40.50.10810">
    <property type="entry name" value="Tandem AAA-ATPase domain"/>
    <property type="match status" value="1"/>
</dbReference>
<dbReference type="InterPro" id="IPR010003">
    <property type="entry name" value="HARP_dom"/>
</dbReference>
<dbReference type="InterPro" id="IPR014001">
    <property type="entry name" value="Helicase_ATP-bd"/>
</dbReference>
<dbReference type="InterPro" id="IPR001650">
    <property type="entry name" value="Helicase_C-like"/>
</dbReference>
<dbReference type="InterPro" id="IPR027417">
    <property type="entry name" value="P-loop_NTPase"/>
</dbReference>
<dbReference type="InterPro" id="IPR038718">
    <property type="entry name" value="SNF2-like_sf"/>
</dbReference>
<dbReference type="InterPro" id="IPR049730">
    <property type="entry name" value="SNF2/RAD54-like_C"/>
</dbReference>
<dbReference type="InterPro" id="IPR000330">
    <property type="entry name" value="SNF2_N"/>
</dbReference>
<dbReference type="PANTHER" id="PTHR45766">
    <property type="entry name" value="DNA ANNEALING HELICASE AND ENDONUCLEASE ZRANB3 FAMILY MEMBER"/>
    <property type="match status" value="1"/>
</dbReference>
<dbReference type="PANTHER" id="PTHR45766:SF6">
    <property type="entry name" value="SWI_SNF-RELATED MATRIX-ASSOCIATED ACTIN-DEPENDENT REGULATOR OF CHROMATIN SUBFAMILY A-LIKE PROTEIN 1"/>
    <property type="match status" value="1"/>
</dbReference>
<dbReference type="Pfam" id="PF07443">
    <property type="entry name" value="HARP"/>
    <property type="match status" value="2"/>
</dbReference>
<dbReference type="Pfam" id="PF00271">
    <property type="entry name" value="Helicase_C"/>
    <property type="match status" value="1"/>
</dbReference>
<dbReference type="Pfam" id="PF00176">
    <property type="entry name" value="SNF2-rel_dom"/>
    <property type="match status" value="1"/>
</dbReference>
<dbReference type="SMART" id="SM00487">
    <property type="entry name" value="DEXDc"/>
    <property type="match status" value="1"/>
</dbReference>
<dbReference type="SMART" id="SM00490">
    <property type="entry name" value="HELICc"/>
    <property type="match status" value="1"/>
</dbReference>
<dbReference type="SUPFAM" id="SSF52540">
    <property type="entry name" value="P-loop containing nucleoside triphosphate hydrolases"/>
    <property type="match status" value="2"/>
</dbReference>
<dbReference type="PROSITE" id="PS51467">
    <property type="entry name" value="HARP"/>
    <property type="match status" value="2"/>
</dbReference>
<dbReference type="PROSITE" id="PS51192">
    <property type="entry name" value="HELICASE_ATP_BIND_1"/>
    <property type="match status" value="1"/>
</dbReference>
<dbReference type="PROSITE" id="PS51194">
    <property type="entry name" value="HELICASE_CTER"/>
    <property type="match status" value="1"/>
</dbReference>
<comment type="function">
    <text evidence="11 12 13 14">ATP-dependent annealing helicase that binds selectively to fork DNA relative to ssDNA or dsDNA and catalyzes the rewinding of the stably unwound DNA. Rewinds single-stranded DNA bubbles that are stably bound by replication protein A (RPA). Acts throughout the genome to reanneal stably unwound DNA, performing the opposite reaction of many enzymes, such as helicases and polymerases, that unwind DNA. May play an important role in DNA damage response by acting at stalled replication forks.</text>
</comment>
<comment type="catalytic activity">
    <reaction evidence="11">
        <text>ATP + H2O = ADP + phosphate + H(+)</text>
        <dbReference type="Rhea" id="RHEA:13065"/>
        <dbReference type="ChEBI" id="CHEBI:15377"/>
        <dbReference type="ChEBI" id="CHEBI:15378"/>
        <dbReference type="ChEBI" id="CHEBI:30616"/>
        <dbReference type="ChEBI" id="CHEBI:43474"/>
        <dbReference type="ChEBI" id="CHEBI:456216"/>
    </reaction>
    <physiologicalReaction direction="left-to-right" evidence="11">
        <dbReference type="Rhea" id="RHEA:13066"/>
    </physiologicalReaction>
</comment>
<comment type="subunit">
    <text evidence="13 14 15 16">Interacts with RPA2; the interaction is direct and mediates the recruitment by the RPA complex of SMARCAL1 to sites of DNA damage.</text>
</comment>
<comment type="interaction">
    <interactant intactId="EBI-5457961">
        <id>Q9NZC9</id>
    </interactant>
    <interactant intactId="EBI-621404">
        <id>P15927</id>
        <label>RPA2</label>
    </interactant>
    <organismsDiffer>false</organismsDiffer>
    <experiments>14</experiments>
</comment>
<comment type="subcellular location">
    <subcellularLocation>
        <location evidence="11 14 15">Nucleus</location>
    </subcellularLocation>
    <text>Recruited to damaged DNA regions.</text>
</comment>
<comment type="tissue specificity">
    <text evidence="6 7">Ubiquitously expressed, with high levels in testis.</text>
</comment>
<comment type="PTM">
    <text evidence="13">DNA damage-regulated phosphorylation by kinases that may include ATM, ATR and PRKDC.</text>
</comment>
<comment type="disease" evidence="7 11 12 14">
    <disease id="DI-02282">
        <name>Schimke immuno-osseous dysplasia</name>
        <acronym>SIOD</acronym>
        <description>An autosomal recessive pleiotropic disorder characterized by spondyloepiphyseal dysplasia, renal dysfunction and immunodeficiency. Arteriosclerosis may also occur in some case.</description>
        <dbReference type="MIM" id="242900"/>
    </disease>
    <text>The disease is caused by variants affecting the gene represented in this entry.</text>
</comment>
<comment type="similarity">
    <text evidence="4">Belongs to the SNF2/RAD54 helicase family. SMARCAL1 subfamily.</text>
</comment>
<comment type="caution">
    <text evidence="12 13 14">Like other proteins within the SNF2 family, do not possess helicase activity but instead has ATP-dependent annealing activity.</text>
</comment>
<comment type="sequence caution" evidence="20">
    <conflict type="erroneous initiation">
        <sequence resource="EMBL-CDS" id="BAA90955"/>
    </conflict>
    <text>Truncated N-terminus.</text>
</comment>
<comment type="online information" name="SMARCAL1base">
    <link uri="https://databases.lovd.nl/shared/genes/SMARCAL1"/>
    <text>SMARCAL1 mutation db</text>
</comment>
<accession>Q9NZC9</accession>
<accession>A6NEH0</accession>
<accession>Q53R00</accession>
<accession>Q96AY1</accession>
<accession>Q9NXQ5</accession>
<accession>Q9UFH3</accession>
<accession>Q9UI93</accession>
<gene>
    <name evidence="21" type="primary">SMARCAL1</name>
    <name evidence="17 18 19" type="synonym">HARP</name>
</gene>